<organism>
    <name type="scientific">Human papillomavirus type 34</name>
    <dbReference type="NCBI Taxonomy" id="333764"/>
    <lineage>
        <taxon>Viruses</taxon>
        <taxon>Monodnaviria</taxon>
        <taxon>Shotokuvirae</taxon>
        <taxon>Cossaviricota</taxon>
        <taxon>Papovaviricetes</taxon>
        <taxon>Zurhausenvirales</taxon>
        <taxon>Papillomaviridae</taxon>
        <taxon>Firstpapillomavirinae</taxon>
        <taxon>Alphapapillomavirus</taxon>
        <taxon>Alphapapillomavirus 11</taxon>
    </lineage>
</organism>
<feature type="chain" id="PRO_0000133601" description="Minor capsid protein L2">
    <location>
        <begin position="1"/>
        <end position="472"/>
    </location>
</feature>
<feature type="short sequence motif" description="Nuclear localization signal" evidence="1">
    <location>
        <begin position="1"/>
        <end position="14"/>
    </location>
</feature>
<feature type="short sequence motif" description="Nuclear localization signal" evidence="1">
    <location>
        <begin position="454"/>
        <end position="462"/>
    </location>
</feature>
<feature type="disulfide bond" evidence="1">
    <location>
        <begin position="23"/>
        <end position="29"/>
    </location>
</feature>
<comment type="function">
    <text evidence="1">Minor protein of the capsid that localizes along the inner surface of the virion, within the central cavities beneath the L1 pentamers. Plays a role in capsid stabilization through interaction with the major capsid protein L1. Once the virion enters the host cell, L2 escorts the genomic DNA into the nucleus by promoting escape from the endosomal compartments and traffic through the host Golgi network. Mechanistically, the C-terminus of L2 possesses a cell-penetrating peptide that protudes from the host endosome, interacts with host cytoplasmic retromer cargo and thereby mediates the capsid delivery to the host trans-Golgi network. Plays a role through its interaction with host dynein in the intracellular microtubule-dependent transport of viral capsid toward the nucleus. Mediates the viral genome import into the nucleus through binding to host importins. Once within the nucleus, L2 localizes viral genomes to host PML bodies in order to activate early gene expression for establishment of infection. Later on, promotes late gene expression by interacting with the viral E2 protein and by inhibiting its transcriptional activation functions. During virion assembly, encapsidates the genome by direct interaction with the viral DNA.</text>
</comment>
<comment type="subunit">
    <text evidence="1">Interacts with major capsid protein L1. Interacts with E2; this interaction inhibits E2 transcriptional activity but not the DNA replication function E2. Interacts with host GADD45GIP1. Interacts with host HSPA8; this interaction is required for L2 nuclear translocation. Interacts with host importins KPNB2 and KPNB3. Forms a complex with importin alpha2-beta1 heterodimers via interaction with the importin alpha2 adapter. Interacts with host DYNLT1; this interaction is essential for virus intracellular transport during entry. Interacts (via C-terminus) with host retromer subunits VPS35 and VPS29.</text>
</comment>
<comment type="subcellular location">
    <subcellularLocation>
        <location evidence="1">Virion</location>
    </subcellularLocation>
    <subcellularLocation>
        <location evidence="1">Host nucleus</location>
    </subcellularLocation>
    <subcellularLocation>
        <location evidence="1">Host early endosome</location>
    </subcellularLocation>
    <subcellularLocation>
        <location evidence="1">Host Golgi apparatus</location>
    </subcellularLocation>
</comment>
<comment type="PTM">
    <text evidence="1">Highly phosphorylated.</text>
</comment>
<comment type="similarity">
    <text evidence="1">Belongs to the papillomaviridae L2 protein family.</text>
</comment>
<reference key="1">
    <citation type="journal article" date="1994" name="Curr. Top. Microbiol. Immunol.">
        <title>Primer-directed sequencing of human papillomavirus types.</title>
        <authorList>
            <person name="Delius H."/>
            <person name="Hofmann B."/>
        </authorList>
    </citation>
    <scope>NUCLEOTIDE SEQUENCE [GENOMIC DNA]</scope>
</reference>
<sequence>MRRKRDTHIRRKRASATQLYKTCKQSGTCPPDIIPKVEGNTLADQILKYGSIGVFFGGLGIGSGSGTGGRTGYVPLPTTTPSRPVEIPLQPTRPPVITSVGASDSSIVSLVEESSFIEAGVPGPTSIVPSSSGFNVTTSVDSTPAIIDVATISDTTQVSVSTFNNPTFTDPSVLQPPPPLEASGRLLFSNDTVTTHSYENIPLDTFVVTTDNNSIVSSTPIPGRHPPARLGLYGRAIQQVKVVDPAFVTTPTRLVTYDNPAFEGLQDTTLEFQHSDLHNAPDSDFLDIVKLHRPALTARKTGIRVSRLGQRATMFTRSGKRIGGRVHFYHDLSPIPTENIELQPLLPSASATVTDANGINDGLYDVLLDNNVDITEVETPTGTNTQSVFASEISTTTANTTIPLNAGLDTHPGPDIALPVPTAETIFTPTVPVQPSGPIYIYGSDFILHPSLYVIPRKRKRLSYFFADVATY</sequence>
<organismHost>
    <name type="scientific">Homo sapiens</name>
    <name type="common">Human</name>
    <dbReference type="NCBI Taxonomy" id="9606"/>
</organismHost>
<gene>
    <name evidence="1" type="primary">L2</name>
</gene>
<evidence type="ECO:0000255" key="1">
    <source>
        <dbReference type="HAMAP-Rule" id="MF_04003"/>
    </source>
</evidence>
<accession>P36758</accession>
<dbReference type="EMBL" id="X74476">
    <property type="protein sequence ID" value="CAA52559.1"/>
    <property type="molecule type" value="Genomic_DNA"/>
</dbReference>
<dbReference type="PIR" id="S36519">
    <property type="entry name" value="S36519"/>
</dbReference>
<dbReference type="RefSeq" id="NP_041811.1">
    <property type="nucleotide sequence ID" value="NC_001587.1"/>
</dbReference>
<dbReference type="DNASU" id="1489434"/>
<dbReference type="GeneID" id="1489434"/>
<dbReference type="KEGG" id="vg:1489434"/>
<dbReference type="OrthoDB" id="8047at10239"/>
<dbReference type="Proteomes" id="UP000009171">
    <property type="component" value="Genome"/>
</dbReference>
<dbReference type="GO" id="GO:0043657">
    <property type="term" value="C:host cell"/>
    <property type="evidence" value="ECO:0007669"/>
    <property type="project" value="GOC"/>
</dbReference>
<dbReference type="GO" id="GO:0044174">
    <property type="term" value="C:host cell endosome"/>
    <property type="evidence" value="ECO:0007669"/>
    <property type="project" value="UniProtKB-KW"/>
</dbReference>
<dbReference type="GO" id="GO:0044177">
    <property type="term" value="C:host cell Golgi apparatus"/>
    <property type="evidence" value="ECO:0007669"/>
    <property type="project" value="UniProtKB-SubCell"/>
</dbReference>
<dbReference type="GO" id="GO:0042025">
    <property type="term" value="C:host cell nucleus"/>
    <property type="evidence" value="ECO:0007669"/>
    <property type="project" value="UniProtKB-SubCell"/>
</dbReference>
<dbReference type="GO" id="GO:0019028">
    <property type="term" value="C:viral capsid"/>
    <property type="evidence" value="ECO:0007669"/>
    <property type="project" value="UniProtKB-UniRule"/>
</dbReference>
<dbReference type="GO" id="GO:0003677">
    <property type="term" value="F:DNA binding"/>
    <property type="evidence" value="ECO:0007669"/>
    <property type="project" value="UniProtKB-UniRule"/>
</dbReference>
<dbReference type="GO" id="GO:0005198">
    <property type="term" value="F:structural molecule activity"/>
    <property type="evidence" value="ECO:0007669"/>
    <property type="project" value="UniProtKB-UniRule"/>
</dbReference>
<dbReference type="GO" id="GO:0075521">
    <property type="term" value="P:microtubule-dependent intracellular transport of viral material towards nucleus"/>
    <property type="evidence" value="ECO:0007669"/>
    <property type="project" value="UniProtKB-UniRule"/>
</dbReference>
<dbReference type="GO" id="GO:0046718">
    <property type="term" value="P:symbiont entry into host cell"/>
    <property type="evidence" value="ECO:0007669"/>
    <property type="project" value="UniProtKB-KW"/>
</dbReference>
<dbReference type="GO" id="GO:0075732">
    <property type="term" value="P:viral penetration into host nucleus"/>
    <property type="evidence" value="ECO:0007669"/>
    <property type="project" value="UniProtKB-KW"/>
</dbReference>
<dbReference type="HAMAP" id="MF_04003">
    <property type="entry name" value="PPV_L2"/>
    <property type="match status" value="1"/>
</dbReference>
<dbReference type="InterPro" id="IPR000784">
    <property type="entry name" value="Late_L2"/>
</dbReference>
<dbReference type="Pfam" id="PF00513">
    <property type="entry name" value="Late_protein_L2"/>
    <property type="match status" value="1"/>
</dbReference>
<proteinExistence type="inferred from homology"/>
<protein>
    <recommendedName>
        <fullName evidence="1">Minor capsid protein L2</fullName>
    </recommendedName>
</protein>
<name>VL2_HPV34</name>
<keyword id="KW-0167">Capsid protein</keyword>
<keyword id="KW-1176">Cytoplasmic inwards viral transport</keyword>
<keyword id="KW-1015">Disulfide bond</keyword>
<keyword id="KW-0238">DNA-binding</keyword>
<keyword id="KW-1039">Host endosome</keyword>
<keyword id="KW-1040">Host Golgi apparatus</keyword>
<keyword id="KW-1048">Host nucleus</keyword>
<keyword id="KW-0945">Host-virus interaction</keyword>
<keyword id="KW-0426">Late protein</keyword>
<keyword id="KW-1177">Microtubular inwards viral transport</keyword>
<keyword id="KW-0597">Phosphoprotein</keyword>
<keyword id="KW-1185">Reference proteome</keyword>
<keyword id="KW-1163">Viral penetration into host nucleus</keyword>
<keyword id="KW-0946">Virion</keyword>
<keyword id="KW-1160">Virus entry into host cell</keyword>